<keyword id="KW-0119">Carbohydrate metabolism</keyword>
<keyword id="KW-0456">Lyase</keyword>
<dbReference type="EC" id="4.2.1.126" evidence="1"/>
<dbReference type="EMBL" id="CP000970">
    <property type="protein sequence ID" value="ACB18684.1"/>
    <property type="molecule type" value="Genomic_DNA"/>
</dbReference>
<dbReference type="RefSeq" id="WP_001175609.1">
    <property type="nucleotide sequence ID" value="NC_010498.1"/>
</dbReference>
<dbReference type="SMR" id="B1LMM2"/>
<dbReference type="KEGG" id="ecm:EcSMS35_2583"/>
<dbReference type="HOGENOM" id="CLU_049049_1_1_6"/>
<dbReference type="UniPathway" id="UPA00342"/>
<dbReference type="UniPathway" id="UPA00343"/>
<dbReference type="UniPathway" id="UPA00544"/>
<dbReference type="Proteomes" id="UP000007011">
    <property type="component" value="Chromosome"/>
</dbReference>
<dbReference type="GO" id="GO:0097367">
    <property type="term" value="F:carbohydrate derivative binding"/>
    <property type="evidence" value="ECO:0007669"/>
    <property type="project" value="InterPro"/>
</dbReference>
<dbReference type="GO" id="GO:0016835">
    <property type="term" value="F:carbon-oxygen lyase activity"/>
    <property type="evidence" value="ECO:0007669"/>
    <property type="project" value="UniProtKB-UniRule"/>
</dbReference>
<dbReference type="GO" id="GO:0016803">
    <property type="term" value="F:ether hydrolase activity"/>
    <property type="evidence" value="ECO:0007669"/>
    <property type="project" value="TreeGrafter"/>
</dbReference>
<dbReference type="GO" id="GO:0097175">
    <property type="term" value="P:1,6-anhydro-N-acetyl-beta-muramic acid catabolic process"/>
    <property type="evidence" value="ECO:0007669"/>
    <property type="project" value="UniProtKB-UniRule"/>
</dbReference>
<dbReference type="GO" id="GO:0046348">
    <property type="term" value="P:amino sugar catabolic process"/>
    <property type="evidence" value="ECO:0007669"/>
    <property type="project" value="InterPro"/>
</dbReference>
<dbReference type="GO" id="GO:0097173">
    <property type="term" value="P:N-acetylmuramic acid catabolic process"/>
    <property type="evidence" value="ECO:0007669"/>
    <property type="project" value="UniProtKB-UniPathway"/>
</dbReference>
<dbReference type="GO" id="GO:0009254">
    <property type="term" value="P:peptidoglycan turnover"/>
    <property type="evidence" value="ECO:0007669"/>
    <property type="project" value="UniProtKB-UniRule"/>
</dbReference>
<dbReference type="CDD" id="cd05007">
    <property type="entry name" value="SIS_Etherase"/>
    <property type="match status" value="1"/>
</dbReference>
<dbReference type="FunFam" id="1.10.8.1080:FF:000001">
    <property type="entry name" value="N-acetylmuramic acid 6-phosphate etherase"/>
    <property type="match status" value="1"/>
</dbReference>
<dbReference type="FunFam" id="3.40.50.10490:FF:000014">
    <property type="entry name" value="N-acetylmuramic acid 6-phosphate etherase"/>
    <property type="match status" value="1"/>
</dbReference>
<dbReference type="Gene3D" id="1.10.8.1080">
    <property type="match status" value="1"/>
</dbReference>
<dbReference type="Gene3D" id="3.40.50.10490">
    <property type="entry name" value="Glucose-6-phosphate isomerase like protein, domain 1"/>
    <property type="match status" value="1"/>
</dbReference>
<dbReference type="HAMAP" id="MF_00068">
    <property type="entry name" value="MurQ"/>
    <property type="match status" value="1"/>
</dbReference>
<dbReference type="InterPro" id="IPR005488">
    <property type="entry name" value="Etherase_MurQ"/>
</dbReference>
<dbReference type="InterPro" id="IPR005486">
    <property type="entry name" value="Glucokinase_regulatory_CS"/>
</dbReference>
<dbReference type="InterPro" id="IPR040190">
    <property type="entry name" value="MURQ/GCKR"/>
</dbReference>
<dbReference type="InterPro" id="IPR001347">
    <property type="entry name" value="SIS_dom"/>
</dbReference>
<dbReference type="InterPro" id="IPR046348">
    <property type="entry name" value="SIS_dom_sf"/>
</dbReference>
<dbReference type="NCBIfam" id="TIGR00274">
    <property type="entry name" value="N-acetylmuramic acid 6-phosphate etherase"/>
    <property type="match status" value="1"/>
</dbReference>
<dbReference type="NCBIfam" id="NF003915">
    <property type="entry name" value="PRK05441.1"/>
    <property type="match status" value="1"/>
</dbReference>
<dbReference type="NCBIfam" id="NF009222">
    <property type="entry name" value="PRK12570.1"/>
    <property type="match status" value="1"/>
</dbReference>
<dbReference type="PANTHER" id="PTHR10088">
    <property type="entry name" value="GLUCOKINASE REGULATORY PROTEIN"/>
    <property type="match status" value="1"/>
</dbReference>
<dbReference type="PANTHER" id="PTHR10088:SF4">
    <property type="entry name" value="GLUCOKINASE REGULATORY PROTEIN"/>
    <property type="match status" value="1"/>
</dbReference>
<dbReference type="Pfam" id="PF20741">
    <property type="entry name" value="GKRP-like_C"/>
    <property type="match status" value="1"/>
</dbReference>
<dbReference type="Pfam" id="PF22645">
    <property type="entry name" value="GKRP_SIS_N"/>
    <property type="match status" value="1"/>
</dbReference>
<dbReference type="SUPFAM" id="SSF53697">
    <property type="entry name" value="SIS domain"/>
    <property type="match status" value="1"/>
</dbReference>
<dbReference type="PROSITE" id="PS01272">
    <property type="entry name" value="GCKR"/>
    <property type="match status" value="1"/>
</dbReference>
<dbReference type="PROSITE" id="PS51464">
    <property type="entry name" value="SIS"/>
    <property type="match status" value="1"/>
</dbReference>
<feature type="chain" id="PRO_1000190183" description="N-acetylmuramic acid 6-phosphate etherase">
    <location>
        <begin position="1"/>
        <end position="298"/>
    </location>
</feature>
<feature type="domain" description="SIS" evidence="1">
    <location>
        <begin position="55"/>
        <end position="218"/>
    </location>
</feature>
<feature type="active site" description="Proton donor" evidence="1">
    <location>
        <position position="83"/>
    </location>
</feature>
<feature type="active site" evidence="1">
    <location>
        <position position="114"/>
    </location>
</feature>
<reference key="1">
    <citation type="journal article" date="2008" name="J. Bacteriol.">
        <title>Insights into the environmental resistance gene pool from the genome sequence of the multidrug-resistant environmental isolate Escherichia coli SMS-3-5.</title>
        <authorList>
            <person name="Fricke W.F."/>
            <person name="Wright M.S."/>
            <person name="Lindell A.H."/>
            <person name="Harkins D.M."/>
            <person name="Baker-Austin C."/>
            <person name="Ravel J."/>
            <person name="Stepanauskas R."/>
        </authorList>
    </citation>
    <scope>NUCLEOTIDE SEQUENCE [LARGE SCALE GENOMIC DNA]</scope>
    <source>
        <strain>SMS-3-5 / SECEC</strain>
    </source>
</reference>
<comment type="function">
    <text evidence="1">Specifically catalyzes the cleavage of the D-lactyl ether substituent of MurNAc 6-phosphate, producing GlcNAc 6-phosphate and D-lactate. Together with AnmK, is also required for the utilization of anhydro-N-acetylmuramic acid (anhMurNAc) either imported from the medium or derived from its own cell wall murein, and thus plays a role in cell wall recycling.</text>
</comment>
<comment type="catalytic activity">
    <reaction evidence="1">
        <text>N-acetyl-D-muramate 6-phosphate + H2O = N-acetyl-D-glucosamine 6-phosphate + (R)-lactate</text>
        <dbReference type="Rhea" id="RHEA:26410"/>
        <dbReference type="ChEBI" id="CHEBI:15377"/>
        <dbReference type="ChEBI" id="CHEBI:16004"/>
        <dbReference type="ChEBI" id="CHEBI:57513"/>
        <dbReference type="ChEBI" id="CHEBI:58722"/>
        <dbReference type="EC" id="4.2.1.126"/>
    </reaction>
</comment>
<comment type="pathway">
    <text evidence="1">Amino-sugar metabolism; 1,6-anhydro-N-acetylmuramate degradation.</text>
</comment>
<comment type="pathway">
    <text evidence="1">Amino-sugar metabolism; N-acetylmuramate degradation.</text>
</comment>
<comment type="pathway">
    <text evidence="1">Cell wall biogenesis; peptidoglycan recycling.</text>
</comment>
<comment type="subunit">
    <text evidence="1">Homodimer.</text>
</comment>
<comment type="induction">
    <text evidence="1">Induced by MurNAc 6-phosphate that releases the repressor MurR from the DNA. Repressed by MurR in the absence of MurNAc 6-phosphate.</text>
</comment>
<comment type="miscellaneous">
    <text evidence="1">A lyase-type mechanism (elimination/hydration) is suggested for the cleavage of the lactyl ether bond of MurNAc 6-phosphate, with the formation of an alpha,beta-unsaturated aldehyde intermediate with (E)-stereochemistry, followed by the syn addition of water to give product.</text>
</comment>
<comment type="similarity">
    <text evidence="1">Belongs to the GCKR-like family. MurNAc-6-P etherase subfamily.</text>
</comment>
<evidence type="ECO:0000255" key="1">
    <source>
        <dbReference type="HAMAP-Rule" id="MF_00068"/>
    </source>
</evidence>
<proteinExistence type="inferred from homology"/>
<protein>
    <recommendedName>
        <fullName evidence="1">N-acetylmuramic acid 6-phosphate etherase</fullName>
        <shortName evidence="1">MurNAc-6-P etherase</shortName>
        <ecNumber evidence="1">4.2.1.126</ecNumber>
    </recommendedName>
    <alternativeName>
        <fullName evidence="1">N-acetylmuramic acid 6-phosphate hydrolase</fullName>
    </alternativeName>
    <alternativeName>
        <fullName evidence="1">N-acetylmuramic acid 6-phosphate lyase</fullName>
    </alternativeName>
</protein>
<name>MURQ_ECOSM</name>
<gene>
    <name evidence="1" type="primary">murQ</name>
    <name type="ordered locus">EcSMS35_2583</name>
</gene>
<sequence>MQLEKMITEGSNAASAEIDRVSTLEMCRIINDEDKTVPLAVERVLPDIAAAIDVIHAQVSGGGRLIYLGAGTSGRLGILDASECPPTYGVKPGLVVGLIAGGEYAIQHAVEGAEDSREGGVNDLKNIGLTAQDVVVGIAASGRTPYVIAGLEYAHQLGCRTVGISCNPGSAVSTTAEFAITPVVGAEVVTGSSRMKAGTAQKLVLNMLSTGLMIKSGKVFGNLMVDVVATNEKLHVRQVNIVKNATGCSAEQAETALIACKRNCKTAIVMVLKNLDADEAKKCLDQHGGFIRKALEKE</sequence>
<organism>
    <name type="scientific">Escherichia coli (strain SMS-3-5 / SECEC)</name>
    <dbReference type="NCBI Taxonomy" id="439855"/>
    <lineage>
        <taxon>Bacteria</taxon>
        <taxon>Pseudomonadati</taxon>
        <taxon>Pseudomonadota</taxon>
        <taxon>Gammaproteobacteria</taxon>
        <taxon>Enterobacterales</taxon>
        <taxon>Enterobacteriaceae</taxon>
        <taxon>Escherichia</taxon>
    </lineage>
</organism>
<accession>B1LMM2</accession>